<organism>
    <name type="scientific">Bradyrhizobium sp. (strain BTAi1 / ATCC BAA-1182)</name>
    <dbReference type="NCBI Taxonomy" id="288000"/>
    <lineage>
        <taxon>Bacteria</taxon>
        <taxon>Pseudomonadati</taxon>
        <taxon>Pseudomonadota</taxon>
        <taxon>Alphaproteobacteria</taxon>
        <taxon>Hyphomicrobiales</taxon>
        <taxon>Nitrobacteraceae</taxon>
        <taxon>Bradyrhizobium</taxon>
    </lineage>
</organism>
<proteinExistence type="inferred from homology"/>
<sequence length="192" mass="21435">MRIGLLGGSFNPPHQAHRAISLFALKRLQLDRVWWLVTPGNPLKDNGGLHALAERAAAARKVAADPRIEISCLESVIGTRYTADTIDYLRRRASRLRFVWIMGADNLAQFHRWQKWQHIAAQVPMAVVDRPPRSFRALNAPAARALARYRLPEADAGRLADRAAPAWVYLTGLKLSLSSTGLRNPDGSWKSI</sequence>
<protein>
    <recommendedName>
        <fullName evidence="1">Probable nicotinate-nucleotide adenylyltransferase</fullName>
        <ecNumber evidence="1">2.7.7.18</ecNumber>
    </recommendedName>
    <alternativeName>
        <fullName evidence="1">Deamido-NAD(+) diphosphorylase</fullName>
    </alternativeName>
    <alternativeName>
        <fullName evidence="1">Deamido-NAD(+) pyrophosphorylase</fullName>
    </alternativeName>
    <alternativeName>
        <fullName evidence="1">Nicotinate mononucleotide adenylyltransferase</fullName>
        <shortName evidence="1">NaMN adenylyltransferase</shortName>
    </alternativeName>
</protein>
<comment type="function">
    <text evidence="1">Catalyzes the reversible adenylation of nicotinate mononucleotide (NaMN) to nicotinic acid adenine dinucleotide (NaAD).</text>
</comment>
<comment type="catalytic activity">
    <reaction evidence="1">
        <text>nicotinate beta-D-ribonucleotide + ATP + H(+) = deamido-NAD(+) + diphosphate</text>
        <dbReference type="Rhea" id="RHEA:22860"/>
        <dbReference type="ChEBI" id="CHEBI:15378"/>
        <dbReference type="ChEBI" id="CHEBI:30616"/>
        <dbReference type="ChEBI" id="CHEBI:33019"/>
        <dbReference type="ChEBI" id="CHEBI:57502"/>
        <dbReference type="ChEBI" id="CHEBI:58437"/>
        <dbReference type="EC" id="2.7.7.18"/>
    </reaction>
</comment>
<comment type="pathway">
    <text evidence="1">Cofactor biosynthesis; NAD(+) biosynthesis; deamido-NAD(+) from nicotinate D-ribonucleotide: step 1/1.</text>
</comment>
<comment type="similarity">
    <text evidence="1">Belongs to the NadD family.</text>
</comment>
<reference key="1">
    <citation type="journal article" date="2007" name="Science">
        <title>Legumes symbioses: absence of nod genes in photosynthetic bradyrhizobia.</title>
        <authorList>
            <person name="Giraud E."/>
            <person name="Moulin L."/>
            <person name="Vallenet D."/>
            <person name="Barbe V."/>
            <person name="Cytryn E."/>
            <person name="Avarre J.-C."/>
            <person name="Jaubert M."/>
            <person name="Simon D."/>
            <person name="Cartieaux F."/>
            <person name="Prin Y."/>
            <person name="Bena G."/>
            <person name="Hannibal L."/>
            <person name="Fardoux J."/>
            <person name="Kojadinovic M."/>
            <person name="Vuillet L."/>
            <person name="Lajus A."/>
            <person name="Cruveiller S."/>
            <person name="Rouy Z."/>
            <person name="Mangenot S."/>
            <person name="Segurens B."/>
            <person name="Dossat C."/>
            <person name="Franck W.L."/>
            <person name="Chang W.-S."/>
            <person name="Saunders E."/>
            <person name="Bruce D."/>
            <person name="Richardson P."/>
            <person name="Normand P."/>
            <person name="Dreyfus B."/>
            <person name="Pignol D."/>
            <person name="Stacey G."/>
            <person name="Emerich D."/>
            <person name="Vermeglio A."/>
            <person name="Medigue C."/>
            <person name="Sadowsky M."/>
        </authorList>
    </citation>
    <scope>NUCLEOTIDE SEQUENCE [LARGE SCALE GENOMIC DNA]</scope>
    <source>
        <strain>BTAi1 / ATCC BAA-1182</strain>
    </source>
</reference>
<accession>A5E960</accession>
<feature type="chain" id="PRO_1000125341" description="Probable nicotinate-nucleotide adenylyltransferase">
    <location>
        <begin position="1"/>
        <end position="192"/>
    </location>
</feature>
<dbReference type="EC" id="2.7.7.18" evidence="1"/>
<dbReference type="EMBL" id="CP000494">
    <property type="protein sequence ID" value="ABQ32704.1"/>
    <property type="molecule type" value="Genomic_DNA"/>
</dbReference>
<dbReference type="SMR" id="A5E960"/>
<dbReference type="STRING" id="288000.BBta_0418"/>
<dbReference type="KEGG" id="bbt:BBta_0418"/>
<dbReference type="eggNOG" id="COG1057">
    <property type="taxonomic scope" value="Bacteria"/>
</dbReference>
<dbReference type="HOGENOM" id="CLU_069765_2_0_5"/>
<dbReference type="UniPathway" id="UPA00253">
    <property type="reaction ID" value="UER00332"/>
</dbReference>
<dbReference type="Proteomes" id="UP000000246">
    <property type="component" value="Chromosome"/>
</dbReference>
<dbReference type="GO" id="GO:0005524">
    <property type="term" value="F:ATP binding"/>
    <property type="evidence" value="ECO:0007669"/>
    <property type="project" value="UniProtKB-KW"/>
</dbReference>
<dbReference type="GO" id="GO:0004515">
    <property type="term" value="F:nicotinate-nucleotide adenylyltransferase activity"/>
    <property type="evidence" value="ECO:0007669"/>
    <property type="project" value="UniProtKB-UniRule"/>
</dbReference>
<dbReference type="GO" id="GO:0009435">
    <property type="term" value="P:NAD biosynthetic process"/>
    <property type="evidence" value="ECO:0007669"/>
    <property type="project" value="UniProtKB-UniRule"/>
</dbReference>
<dbReference type="CDD" id="cd02165">
    <property type="entry name" value="NMNAT"/>
    <property type="match status" value="1"/>
</dbReference>
<dbReference type="Gene3D" id="3.40.50.620">
    <property type="entry name" value="HUPs"/>
    <property type="match status" value="1"/>
</dbReference>
<dbReference type="HAMAP" id="MF_00244">
    <property type="entry name" value="NaMN_adenylyltr"/>
    <property type="match status" value="1"/>
</dbReference>
<dbReference type="InterPro" id="IPR004821">
    <property type="entry name" value="Cyt_trans-like"/>
</dbReference>
<dbReference type="InterPro" id="IPR005248">
    <property type="entry name" value="NadD/NMNAT"/>
</dbReference>
<dbReference type="InterPro" id="IPR014729">
    <property type="entry name" value="Rossmann-like_a/b/a_fold"/>
</dbReference>
<dbReference type="NCBIfam" id="TIGR00482">
    <property type="entry name" value="nicotinate (nicotinamide) nucleotide adenylyltransferase"/>
    <property type="match status" value="1"/>
</dbReference>
<dbReference type="NCBIfam" id="NF000843">
    <property type="entry name" value="PRK00071.2-2"/>
    <property type="match status" value="1"/>
</dbReference>
<dbReference type="NCBIfam" id="NF000845">
    <property type="entry name" value="PRK00071.2-4"/>
    <property type="match status" value="1"/>
</dbReference>
<dbReference type="NCBIfam" id="NF000846">
    <property type="entry name" value="PRK00071.2-5"/>
    <property type="match status" value="1"/>
</dbReference>
<dbReference type="PANTHER" id="PTHR39321">
    <property type="entry name" value="NICOTINATE-NUCLEOTIDE ADENYLYLTRANSFERASE-RELATED"/>
    <property type="match status" value="1"/>
</dbReference>
<dbReference type="PANTHER" id="PTHR39321:SF3">
    <property type="entry name" value="PHOSPHOPANTETHEINE ADENYLYLTRANSFERASE"/>
    <property type="match status" value="1"/>
</dbReference>
<dbReference type="Pfam" id="PF01467">
    <property type="entry name" value="CTP_transf_like"/>
    <property type="match status" value="1"/>
</dbReference>
<dbReference type="SUPFAM" id="SSF52374">
    <property type="entry name" value="Nucleotidylyl transferase"/>
    <property type="match status" value="1"/>
</dbReference>
<evidence type="ECO:0000255" key="1">
    <source>
        <dbReference type="HAMAP-Rule" id="MF_00244"/>
    </source>
</evidence>
<keyword id="KW-0067">ATP-binding</keyword>
<keyword id="KW-0520">NAD</keyword>
<keyword id="KW-0547">Nucleotide-binding</keyword>
<keyword id="KW-0548">Nucleotidyltransferase</keyword>
<keyword id="KW-0662">Pyridine nucleotide biosynthesis</keyword>
<keyword id="KW-1185">Reference proteome</keyword>
<keyword id="KW-0808">Transferase</keyword>
<gene>
    <name evidence="1" type="primary">nadD</name>
    <name type="ordered locus">BBta_0418</name>
</gene>
<name>NADD_BRASB</name>